<evidence type="ECO:0000255" key="1">
    <source>
        <dbReference type="HAMAP-Rule" id="MF_01903"/>
    </source>
</evidence>
<organism>
    <name type="scientific">Escherichia coli (strain 55989 / EAEC)</name>
    <dbReference type="NCBI Taxonomy" id="585055"/>
    <lineage>
        <taxon>Bacteria</taxon>
        <taxon>Pseudomonadati</taxon>
        <taxon>Pseudomonadota</taxon>
        <taxon>Gammaproteobacteria</taxon>
        <taxon>Enterobacterales</taxon>
        <taxon>Enterobacteriaceae</taxon>
        <taxon>Escherichia</taxon>
    </lineage>
</organism>
<name>XGPT_ECO55</name>
<sequence>MSEKYIVTWDMLQIHARKLASRLMPSEQWKGIIAVSRGGLVPGALLARELGIRHVDTVCISSYDHDNQRELKVLKRAEGDGEGFIVIDDLVDTGGTAVAIREMYPKAHFVTIFAKPAGRPLVDDYVVDIPQDTWIEQPWDMGVVFVPPISGR</sequence>
<protein>
    <recommendedName>
        <fullName evidence="1">Xanthine-guanine phosphoribosyltransferase</fullName>
        <shortName evidence="1">XGPRT</shortName>
        <ecNumber evidence="1">2.4.2.-</ecNumber>
        <ecNumber evidence="1">2.4.2.22</ecNumber>
    </recommendedName>
    <alternativeName>
        <fullName evidence="1">Xanthine phosphoribosyltransferase</fullName>
    </alternativeName>
</protein>
<feature type="chain" id="PRO_1000188739" description="Xanthine-guanine phosphoribosyltransferase">
    <location>
        <begin position="1"/>
        <end position="152"/>
    </location>
</feature>
<feature type="binding site" evidence="1">
    <location>
        <begin position="37"/>
        <end position="38"/>
    </location>
    <ligand>
        <name>5-phospho-alpha-D-ribose 1-diphosphate</name>
        <dbReference type="ChEBI" id="CHEBI:58017"/>
    </ligand>
</feature>
<feature type="binding site" evidence="1">
    <location>
        <position position="69"/>
    </location>
    <ligand>
        <name>5-phospho-alpha-D-ribose 1-diphosphate</name>
        <dbReference type="ChEBI" id="CHEBI:58017"/>
    </ligand>
</feature>
<feature type="binding site" evidence="1">
    <location>
        <position position="69"/>
    </location>
    <ligand>
        <name>GMP</name>
        <dbReference type="ChEBI" id="CHEBI:58115"/>
    </ligand>
</feature>
<feature type="binding site" evidence="1">
    <location>
        <begin position="88"/>
        <end position="96"/>
    </location>
    <ligand>
        <name>5-phospho-alpha-D-ribose 1-diphosphate</name>
        <dbReference type="ChEBI" id="CHEBI:58017"/>
    </ligand>
</feature>
<feature type="binding site" evidence="1">
    <location>
        <position position="89"/>
    </location>
    <ligand>
        <name>Mg(2+)</name>
        <dbReference type="ChEBI" id="CHEBI:18420"/>
    </ligand>
</feature>
<feature type="binding site" evidence="1">
    <location>
        <begin position="92"/>
        <end position="96"/>
    </location>
    <ligand>
        <name>GMP</name>
        <dbReference type="ChEBI" id="CHEBI:58115"/>
    </ligand>
</feature>
<feature type="binding site" evidence="1">
    <location>
        <position position="92"/>
    </location>
    <ligand>
        <name>guanine</name>
        <dbReference type="ChEBI" id="CHEBI:16235"/>
    </ligand>
</feature>
<feature type="binding site" evidence="1">
    <location>
        <position position="92"/>
    </location>
    <ligand>
        <name>xanthine</name>
        <dbReference type="ChEBI" id="CHEBI:17712"/>
    </ligand>
</feature>
<feature type="binding site" evidence="1">
    <location>
        <begin position="134"/>
        <end position="135"/>
    </location>
    <ligand>
        <name>GMP</name>
        <dbReference type="ChEBI" id="CHEBI:58115"/>
    </ligand>
</feature>
<feature type="binding site" evidence="1">
    <location>
        <position position="135"/>
    </location>
    <ligand>
        <name>guanine</name>
        <dbReference type="ChEBI" id="CHEBI:16235"/>
    </ligand>
</feature>
<feature type="binding site" evidence="1">
    <location>
        <position position="135"/>
    </location>
    <ligand>
        <name>xanthine</name>
        <dbReference type="ChEBI" id="CHEBI:17712"/>
    </ligand>
</feature>
<keyword id="KW-0997">Cell inner membrane</keyword>
<keyword id="KW-1003">Cell membrane</keyword>
<keyword id="KW-0328">Glycosyltransferase</keyword>
<keyword id="KW-0460">Magnesium</keyword>
<keyword id="KW-0472">Membrane</keyword>
<keyword id="KW-0479">Metal-binding</keyword>
<keyword id="KW-0660">Purine salvage</keyword>
<keyword id="KW-1185">Reference proteome</keyword>
<keyword id="KW-0808">Transferase</keyword>
<reference key="1">
    <citation type="journal article" date="2009" name="PLoS Genet.">
        <title>Organised genome dynamics in the Escherichia coli species results in highly diverse adaptive paths.</title>
        <authorList>
            <person name="Touchon M."/>
            <person name="Hoede C."/>
            <person name="Tenaillon O."/>
            <person name="Barbe V."/>
            <person name="Baeriswyl S."/>
            <person name="Bidet P."/>
            <person name="Bingen E."/>
            <person name="Bonacorsi S."/>
            <person name="Bouchier C."/>
            <person name="Bouvet O."/>
            <person name="Calteau A."/>
            <person name="Chiapello H."/>
            <person name="Clermont O."/>
            <person name="Cruveiller S."/>
            <person name="Danchin A."/>
            <person name="Diard M."/>
            <person name="Dossat C."/>
            <person name="Karoui M.E."/>
            <person name="Frapy E."/>
            <person name="Garry L."/>
            <person name="Ghigo J.M."/>
            <person name="Gilles A.M."/>
            <person name="Johnson J."/>
            <person name="Le Bouguenec C."/>
            <person name="Lescat M."/>
            <person name="Mangenot S."/>
            <person name="Martinez-Jehanne V."/>
            <person name="Matic I."/>
            <person name="Nassif X."/>
            <person name="Oztas S."/>
            <person name="Petit M.A."/>
            <person name="Pichon C."/>
            <person name="Rouy Z."/>
            <person name="Ruf C.S."/>
            <person name="Schneider D."/>
            <person name="Tourret J."/>
            <person name="Vacherie B."/>
            <person name="Vallenet D."/>
            <person name="Medigue C."/>
            <person name="Rocha E.P.C."/>
            <person name="Denamur E."/>
        </authorList>
    </citation>
    <scope>NUCLEOTIDE SEQUENCE [LARGE SCALE GENOMIC DNA]</scope>
    <source>
        <strain>55989 / EAEC</strain>
    </source>
</reference>
<gene>
    <name evidence="1" type="primary">gpt</name>
    <name type="ordered locus">EC55989_0262</name>
</gene>
<dbReference type="EC" id="2.4.2.-" evidence="1"/>
<dbReference type="EC" id="2.4.2.22" evidence="1"/>
<dbReference type="EMBL" id="CU928145">
    <property type="protein sequence ID" value="CAU96141.1"/>
    <property type="molecule type" value="Genomic_DNA"/>
</dbReference>
<dbReference type="RefSeq" id="WP_001291990.1">
    <property type="nucleotide sequence ID" value="NC_011748.1"/>
</dbReference>
<dbReference type="SMR" id="B7L3Z0"/>
<dbReference type="GeneID" id="93777155"/>
<dbReference type="KEGG" id="eck:EC55989_0262"/>
<dbReference type="HOGENOM" id="CLU_080904_3_0_6"/>
<dbReference type="UniPathway" id="UPA00602">
    <property type="reaction ID" value="UER00658"/>
</dbReference>
<dbReference type="UniPathway" id="UPA00909">
    <property type="reaction ID" value="UER00887"/>
</dbReference>
<dbReference type="Proteomes" id="UP000000746">
    <property type="component" value="Chromosome"/>
</dbReference>
<dbReference type="GO" id="GO:0005829">
    <property type="term" value="C:cytosol"/>
    <property type="evidence" value="ECO:0007669"/>
    <property type="project" value="TreeGrafter"/>
</dbReference>
<dbReference type="GO" id="GO:0005886">
    <property type="term" value="C:plasma membrane"/>
    <property type="evidence" value="ECO:0007669"/>
    <property type="project" value="UniProtKB-SubCell"/>
</dbReference>
<dbReference type="GO" id="GO:0052657">
    <property type="term" value="F:guanine phosphoribosyltransferase activity"/>
    <property type="evidence" value="ECO:0007669"/>
    <property type="project" value="RHEA"/>
</dbReference>
<dbReference type="GO" id="GO:0004422">
    <property type="term" value="F:hypoxanthine phosphoribosyltransferase activity"/>
    <property type="evidence" value="ECO:0007669"/>
    <property type="project" value="TreeGrafter"/>
</dbReference>
<dbReference type="GO" id="GO:0000287">
    <property type="term" value="F:magnesium ion binding"/>
    <property type="evidence" value="ECO:0007669"/>
    <property type="project" value="UniProtKB-UniRule"/>
</dbReference>
<dbReference type="GO" id="GO:0000310">
    <property type="term" value="F:xanthine phosphoribosyltransferase activity"/>
    <property type="evidence" value="ECO:0007669"/>
    <property type="project" value="UniProtKB-UniRule"/>
</dbReference>
<dbReference type="GO" id="GO:0032263">
    <property type="term" value="P:GMP salvage"/>
    <property type="evidence" value="ECO:0007669"/>
    <property type="project" value="UniProtKB-UniRule"/>
</dbReference>
<dbReference type="GO" id="GO:0032264">
    <property type="term" value="P:IMP salvage"/>
    <property type="evidence" value="ECO:0007669"/>
    <property type="project" value="TreeGrafter"/>
</dbReference>
<dbReference type="GO" id="GO:0006166">
    <property type="term" value="P:purine ribonucleoside salvage"/>
    <property type="evidence" value="ECO:0007669"/>
    <property type="project" value="UniProtKB-KW"/>
</dbReference>
<dbReference type="GO" id="GO:0032265">
    <property type="term" value="P:XMP salvage"/>
    <property type="evidence" value="ECO:0007669"/>
    <property type="project" value="UniProtKB-UniRule"/>
</dbReference>
<dbReference type="CDD" id="cd06223">
    <property type="entry name" value="PRTases_typeI"/>
    <property type="match status" value="1"/>
</dbReference>
<dbReference type="FunFam" id="3.40.50.2020:FF:000009">
    <property type="entry name" value="Xanthine phosphoribosyltransferase"/>
    <property type="match status" value="1"/>
</dbReference>
<dbReference type="Gene3D" id="3.40.50.2020">
    <property type="match status" value="1"/>
</dbReference>
<dbReference type="HAMAP" id="MF_01903">
    <property type="entry name" value="XGPRT"/>
    <property type="match status" value="1"/>
</dbReference>
<dbReference type="InterPro" id="IPR000836">
    <property type="entry name" value="PRibTrfase_dom"/>
</dbReference>
<dbReference type="InterPro" id="IPR029057">
    <property type="entry name" value="PRTase-like"/>
</dbReference>
<dbReference type="InterPro" id="IPR023747">
    <property type="entry name" value="Xanthine_Guanine_PRibTrfase"/>
</dbReference>
<dbReference type="NCBIfam" id="NF006613">
    <property type="entry name" value="PRK09177.1"/>
    <property type="match status" value="1"/>
</dbReference>
<dbReference type="PANTHER" id="PTHR39563">
    <property type="entry name" value="XANTHINE PHOSPHORIBOSYLTRANSFERASE"/>
    <property type="match status" value="1"/>
</dbReference>
<dbReference type="PANTHER" id="PTHR39563:SF1">
    <property type="entry name" value="XANTHINE-GUANINE PHOSPHORIBOSYLTRANSFERASE"/>
    <property type="match status" value="1"/>
</dbReference>
<dbReference type="Pfam" id="PF00156">
    <property type="entry name" value="Pribosyltran"/>
    <property type="match status" value="1"/>
</dbReference>
<dbReference type="SUPFAM" id="SSF53271">
    <property type="entry name" value="PRTase-like"/>
    <property type="match status" value="1"/>
</dbReference>
<dbReference type="PROSITE" id="PS00103">
    <property type="entry name" value="PUR_PYR_PR_TRANSFER"/>
    <property type="match status" value="1"/>
</dbReference>
<accession>B7L3Z0</accession>
<comment type="function">
    <text evidence="1">Purine salvage pathway enzyme that catalyzes the transfer of the ribosyl-5-phosphate group from 5-phospho-alpha-D-ribose 1-diphosphate (PRPP) to the N9 position of the 6-oxopurines guanine and xanthine to form the corresponding ribonucleotides GMP (guanosine 5'-monophosphate) and XMP (xanthosine 5'-monophosphate), with the release of PPi. To a lesser extent, also acts on hypoxanthine.</text>
</comment>
<comment type="catalytic activity">
    <reaction evidence="1">
        <text>GMP + diphosphate = guanine + 5-phospho-alpha-D-ribose 1-diphosphate</text>
        <dbReference type="Rhea" id="RHEA:25424"/>
        <dbReference type="ChEBI" id="CHEBI:16235"/>
        <dbReference type="ChEBI" id="CHEBI:33019"/>
        <dbReference type="ChEBI" id="CHEBI:58017"/>
        <dbReference type="ChEBI" id="CHEBI:58115"/>
    </reaction>
    <physiologicalReaction direction="right-to-left" evidence="1">
        <dbReference type="Rhea" id="RHEA:25426"/>
    </physiologicalReaction>
</comment>
<comment type="catalytic activity">
    <reaction evidence="1">
        <text>XMP + diphosphate = xanthine + 5-phospho-alpha-D-ribose 1-diphosphate</text>
        <dbReference type="Rhea" id="RHEA:10800"/>
        <dbReference type="ChEBI" id="CHEBI:17712"/>
        <dbReference type="ChEBI" id="CHEBI:33019"/>
        <dbReference type="ChEBI" id="CHEBI:57464"/>
        <dbReference type="ChEBI" id="CHEBI:58017"/>
        <dbReference type="EC" id="2.4.2.22"/>
    </reaction>
    <physiologicalReaction direction="right-to-left" evidence="1">
        <dbReference type="Rhea" id="RHEA:10802"/>
    </physiologicalReaction>
</comment>
<comment type="catalytic activity">
    <reaction evidence="1">
        <text>IMP + diphosphate = hypoxanthine + 5-phospho-alpha-D-ribose 1-diphosphate</text>
        <dbReference type="Rhea" id="RHEA:17973"/>
        <dbReference type="ChEBI" id="CHEBI:17368"/>
        <dbReference type="ChEBI" id="CHEBI:33019"/>
        <dbReference type="ChEBI" id="CHEBI:58017"/>
        <dbReference type="ChEBI" id="CHEBI:58053"/>
    </reaction>
    <physiologicalReaction direction="right-to-left" evidence="1">
        <dbReference type="Rhea" id="RHEA:17975"/>
    </physiologicalReaction>
</comment>
<comment type="cofactor">
    <cofactor evidence="1">
        <name>Mg(2+)</name>
        <dbReference type="ChEBI" id="CHEBI:18420"/>
    </cofactor>
</comment>
<comment type="pathway">
    <text evidence="1">Purine metabolism; GMP biosynthesis via salvage pathway; GMP from guanine: step 1/1.</text>
</comment>
<comment type="pathway">
    <text evidence="1">Purine metabolism; XMP biosynthesis via salvage pathway; XMP from xanthine: step 1/1.</text>
</comment>
<comment type="subunit">
    <text evidence="1">Homotetramer.</text>
</comment>
<comment type="subcellular location">
    <subcellularLocation>
        <location evidence="1">Cell inner membrane</location>
        <topology evidence="1">Peripheral membrane protein</topology>
    </subcellularLocation>
</comment>
<comment type="similarity">
    <text evidence="1">Belongs to the purine/pyrimidine phosphoribosyltransferase family. XGPT subfamily.</text>
</comment>
<proteinExistence type="inferred from homology"/>